<proteinExistence type="inferred from homology"/>
<sequence length="142" mass="16019">MKTFTAKPETVKRDWYVVDATGKTLGRLATELARRLRGKHKAEYTPHVDTGDYIIVLNADKVAVTGNKRTDKVYYHHTGHIGGIKQATFEEMIARRPERVIEIAVKGMLPKGPLGRAMFRKLKVYAGNEHNHAAQQPQVLDI</sequence>
<evidence type="ECO:0000255" key="1">
    <source>
        <dbReference type="HAMAP-Rule" id="MF_01366"/>
    </source>
</evidence>
<evidence type="ECO:0000305" key="2"/>
<protein>
    <recommendedName>
        <fullName evidence="1">Large ribosomal subunit protein uL13</fullName>
    </recommendedName>
    <alternativeName>
        <fullName evidence="2">50S ribosomal protein L13</fullName>
    </alternativeName>
</protein>
<comment type="function">
    <text evidence="1">This protein is one of the early assembly proteins of the 50S ribosomal subunit, although it is not seen to bind rRNA by itself. It is important during the early stages of 50S assembly.</text>
</comment>
<comment type="subunit">
    <text evidence="1">Part of the 50S ribosomal subunit.</text>
</comment>
<comment type="similarity">
    <text evidence="1">Belongs to the universal ribosomal protein uL13 family.</text>
</comment>
<gene>
    <name evidence="1" type="primary">rplM</name>
    <name type="ordered locus">EFER_3202</name>
</gene>
<reference key="1">
    <citation type="journal article" date="2009" name="PLoS Genet.">
        <title>Organised genome dynamics in the Escherichia coli species results in highly diverse adaptive paths.</title>
        <authorList>
            <person name="Touchon M."/>
            <person name="Hoede C."/>
            <person name="Tenaillon O."/>
            <person name="Barbe V."/>
            <person name="Baeriswyl S."/>
            <person name="Bidet P."/>
            <person name="Bingen E."/>
            <person name="Bonacorsi S."/>
            <person name="Bouchier C."/>
            <person name="Bouvet O."/>
            <person name="Calteau A."/>
            <person name="Chiapello H."/>
            <person name="Clermont O."/>
            <person name="Cruveiller S."/>
            <person name="Danchin A."/>
            <person name="Diard M."/>
            <person name="Dossat C."/>
            <person name="Karoui M.E."/>
            <person name="Frapy E."/>
            <person name="Garry L."/>
            <person name="Ghigo J.M."/>
            <person name="Gilles A.M."/>
            <person name="Johnson J."/>
            <person name="Le Bouguenec C."/>
            <person name="Lescat M."/>
            <person name="Mangenot S."/>
            <person name="Martinez-Jehanne V."/>
            <person name="Matic I."/>
            <person name="Nassif X."/>
            <person name="Oztas S."/>
            <person name="Petit M.A."/>
            <person name="Pichon C."/>
            <person name="Rouy Z."/>
            <person name="Ruf C.S."/>
            <person name="Schneider D."/>
            <person name="Tourret J."/>
            <person name="Vacherie B."/>
            <person name="Vallenet D."/>
            <person name="Medigue C."/>
            <person name="Rocha E.P.C."/>
            <person name="Denamur E."/>
        </authorList>
    </citation>
    <scope>NUCLEOTIDE SEQUENCE [LARGE SCALE GENOMIC DNA]</scope>
    <source>
        <strain>ATCC 35469 / DSM 13698 / BCRC 15582 / CCUG 18766 / IAM 14443 / JCM 21226 / LMG 7866 / NBRC 102419 / NCTC 12128 / CDC 0568-73</strain>
    </source>
</reference>
<keyword id="KW-0687">Ribonucleoprotein</keyword>
<keyword id="KW-0689">Ribosomal protein</keyword>
<name>RL13_ESCF3</name>
<dbReference type="EMBL" id="CU928158">
    <property type="protein sequence ID" value="CAQ90695.1"/>
    <property type="molecule type" value="Genomic_DNA"/>
</dbReference>
<dbReference type="RefSeq" id="WP_000847559.1">
    <property type="nucleotide sequence ID" value="NC_011740.1"/>
</dbReference>
<dbReference type="SMR" id="B7LRJ9"/>
<dbReference type="GeneID" id="89518067"/>
<dbReference type="KEGG" id="efe:EFER_3202"/>
<dbReference type="HOGENOM" id="CLU_082184_2_2_6"/>
<dbReference type="OrthoDB" id="9801330at2"/>
<dbReference type="Proteomes" id="UP000000745">
    <property type="component" value="Chromosome"/>
</dbReference>
<dbReference type="GO" id="GO:0022625">
    <property type="term" value="C:cytosolic large ribosomal subunit"/>
    <property type="evidence" value="ECO:0007669"/>
    <property type="project" value="TreeGrafter"/>
</dbReference>
<dbReference type="GO" id="GO:0003729">
    <property type="term" value="F:mRNA binding"/>
    <property type="evidence" value="ECO:0007669"/>
    <property type="project" value="TreeGrafter"/>
</dbReference>
<dbReference type="GO" id="GO:0003735">
    <property type="term" value="F:structural constituent of ribosome"/>
    <property type="evidence" value="ECO:0007669"/>
    <property type="project" value="InterPro"/>
</dbReference>
<dbReference type="GO" id="GO:0017148">
    <property type="term" value="P:negative regulation of translation"/>
    <property type="evidence" value="ECO:0007669"/>
    <property type="project" value="TreeGrafter"/>
</dbReference>
<dbReference type="GO" id="GO:0006412">
    <property type="term" value="P:translation"/>
    <property type="evidence" value="ECO:0007669"/>
    <property type="project" value="UniProtKB-UniRule"/>
</dbReference>
<dbReference type="CDD" id="cd00392">
    <property type="entry name" value="Ribosomal_L13"/>
    <property type="match status" value="1"/>
</dbReference>
<dbReference type="FunFam" id="3.90.1180.10:FF:000001">
    <property type="entry name" value="50S ribosomal protein L13"/>
    <property type="match status" value="1"/>
</dbReference>
<dbReference type="Gene3D" id="3.90.1180.10">
    <property type="entry name" value="Ribosomal protein L13"/>
    <property type="match status" value="1"/>
</dbReference>
<dbReference type="HAMAP" id="MF_01366">
    <property type="entry name" value="Ribosomal_uL13"/>
    <property type="match status" value="1"/>
</dbReference>
<dbReference type="InterPro" id="IPR005822">
    <property type="entry name" value="Ribosomal_uL13"/>
</dbReference>
<dbReference type="InterPro" id="IPR005823">
    <property type="entry name" value="Ribosomal_uL13_bac-type"/>
</dbReference>
<dbReference type="InterPro" id="IPR023563">
    <property type="entry name" value="Ribosomal_uL13_CS"/>
</dbReference>
<dbReference type="InterPro" id="IPR036899">
    <property type="entry name" value="Ribosomal_uL13_sf"/>
</dbReference>
<dbReference type="NCBIfam" id="TIGR01066">
    <property type="entry name" value="rplM_bact"/>
    <property type="match status" value="1"/>
</dbReference>
<dbReference type="PANTHER" id="PTHR11545:SF2">
    <property type="entry name" value="LARGE RIBOSOMAL SUBUNIT PROTEIN UL13M"/>
    <property type="match status" value="1"/>
</dbReference>
<dbReference type="PANTHER" id="PTHR11545">
    <property type="entry name" value="RIBOSOMAL PROTEIN L13"/>
    <property type="match status" value="1"/>
</dbReference>
<dbReference type="Pfam" id="PF00572">
    <property type="entry name" value="Ribosomal_L13"/>
    <property type="match status" value="1"/>
</dbReference>
<dbReference type="PIRSF" id="PIRSF002181">
    <property type="entry name" value="Ribosomal_L13"/>
    <property type="match status" value="1"/>
</dbReference>
<dbReference type="SUPFAM" id="SSF52161">
    <property type="entry name" value="Ribosomal protein L13"/>
    <property type="match status" value="1"/>
</dbReference>
<dbReference type="PROSITE" id="PS00783">
    <property type="entry name" value="RIBOSOMAL_L13"/>
    <property type="match status" value="1"/>
</dbReference>
<feature type="chain" id="PRO_1000144129" description="Large ribosomal subunit protein uL13">
    <location>
        <begin position="1"/>
        <end position="142"/>
    </location>
</feature>
<accession>B7LRJ9</accession>
<organism>
    <name type="scientific">Escherichia fergusonii (strain ATCC 35469 / DSM 13698 / CCUG 18766 / IAM 14443 / JCM 21226 / LMG 7866 / NBRC 102419 / NCTC 12128 / CDC 0568-73)</name>
    <dbReference type="NCBI Taxonomy" id="585054"/>
    <lineage>
        <taxon>Bacteria</taxon>
        <taxon>Pseudomonadati</taxon>
        <taxon>Pseudomonadota</taxon>
        <taxon>Gammaproteobacteria</taxon>
        <taxon>Enterobacterales</taxon>
        <taxon>Enterobacteriaceae</taxon>
        <taxon>Escherichia</taxon>
    </lineage>
</organism>